<accession>F4I8R6</accession>
<accession>Q9ZVZ6</accession>
<dbReference type="EMBL" id="AC005106">
    <property type="protein sequence ID" value="AAF79723.1"/>
    <property type="status" value="ALT_INIT"/>
    <property type="molecule type" value="Genomic_DNA"/>
</dbReference>
<dbReference type="EMBL" id="CP002684">
    <property type="protein sequence ID" value="AEE27838.1"/>
    <property type="molecule type" value="Genomic_DNA"/>
</dbReference>
<dbReference type="PIR" id="A86189">
    <property type="entry name" value="A86189"/>
</dbReference>
<dbReference type="RefSeq" id="NP_001323411.1">
    <property type="nucleotide sequence ID" value="NM_001331548.1"/>
</dbReference>
<dbReference type="RefSeq" id="NP_172033.1">
    <property type="nucleotide sequence ID" value="NM_100421.2"/>
</dbReference>
<dbReference type="BioGRID" id="22285">
    <property type="interactions" value="8"/>
</dbReference>
<dbReference type="FunCoup" id="F4I8R6">
    <property type="interactions" value="3"/>
</dbReference>
<dbReference type="IntAct" id="F4I8R6">
    <property type="interactions" value="7"/>
</dbReference>
<dbReference type="STRING" id="3702.F4I8R6"/>
<dbReference type="PaxDb" id="3702-AT1G05420.1"/>
<dbReference type="EnsemblPlants" id="AT1G05420.1">
    <property type="protein sequence ID" value="AT1G05420.1"/>
    <property type="gene ID" value="AT1G05420"/>
</dbReference>
<dbReference type="GeneID" id="837043"/>
<dbReference type="Gramene" id="AT1G05420.1">
    <property type="protein sequence ID" value="AT1G05420.1"/>
    <property type="gene ID" value="AT1G05420"/>
</dbReference>
<dbReference type="KEGG" id="ath:AT1G05420"/>
<dbReference type="Araport" id="AT1G05420"/>
<dbReference type="TAIR" id="AT1G05420">
    <property type="gene designation" value="OFP12"/>
</dbReference>
<dbReference type="eggNOG" id="ENOG502S0CD">
    <property type="taxonomic scope" value="Eukaryota"/>
</dbReference>
<dbReference type="HOGENOM" id="CLU_069722_1_0_1"/>
<dbReference type="InParanoid" id="F4I8R6"/>
<dbReference type="OMA" id="DDRRENP"/>
<dbReference type="PRO" id="PR:F4I8R6"/>
<dbReference type="Proteomes" id="UP000006548">
    <property type="component" value="Chromosome 1"/>
</dbReference>
<dbReference type="ExpressionAtlas" id="F4I8R6">
    <property type="expression patterns" value="baseline and differential"/>
</dbReference>
<dbReference type="GO" id="GO:0005634">
    <property type="term" value="C:nucleus"/>
    <property type="evidence" value="ECO:0007669"/>
    <property type="project" value="UniProtKB-SubCell"/>
</dbReference>
<dbReference type="GO" id="GO:0045892">
    <property type="term" value="P:negative regulation of DNA-templated transcription"/>
    <property type="evidence" value="ECO:0000314"/>
    <property type="project" value="TAIR"/>
</dbReference>
<dbReference type="InterPro" id="IPR038933">
    <property type="entry name" value="Ovate"/>
</dbReference>
<dbReference type="InterPro" id="IPR006458">
    <property type="entry name" value="Ovate_C"/>
</dbReference>
<dbReference type="NCBIfam" id="TIGR01568">
    <property type="entry name" value="A_thal_3678"/>
    <property type="match status" value="1"/>
</dbReference>
<dbReference type="PANTHER" id="PTHR33057:SF175">
    <property type="entry name" value="TRANSCRIPTION REPRESSOR OFP12"/>
    <property type="match status" value="1"/>
</dbReference>
<dbReference type="PANTHER" id="PTHR33057">
    <property type="entry name" value="TRANSCRIPTION REPRESSOR OFP7-RELATED"/>
    <property type="match status" value="1"/>
</dbReference>
<dbReference type="Pfam" id="PF04844">
    <property type="entry name" value="Ovate"/>
    <property type="match status" value="1"/>
</dbReference>
<dbReference type="PROSITE" id="PS51754">
    <property type="entry name" value="OVATE"/>
    <property type="match status" value="1"/>
</dbReference>
<keyword id="KW-0539">Nucleus</keyword>
<keyword id="KW-1185">Reference proteome</keyword>
<keyword id="KW-0678">Repressor</keyword>
<keyword id="KW-0804">Transcription</keyword>
<keyword id="KW-0805">Transcription regulation</keyword>
<protein>
    <recommendedName>
        <fullName>Transcription repressor OFP12</fullName>
    </recommendedName>
    <alternativeName>
        <fullName>Ovate family protein 12</fullName>
        <shortName>AtOFP12</shortName>
    </alternativeName>
</protein>
<organism>
    <name type="scientific">Arabidopsis thaliana</name>
    <name type="common">Mouse-ear cress</name>
    <dbReference type="NCBI Taxonomy" id="3702"/>
    <lineage>
        <taxon>Eukaryota</taxon>
        <taxon>Viridiplantae</taxon>
        <taxon>Streptophyta</taxon>
        <taxon>Embryophyta</taxon>
        <taxon>Tracheophyta</taxon>
        <taxon>Spermatophyta</taxon>
        <taxon>Magnoliopsida</taxon>
        <taxon>eudicotyledons</taxon>
        <taxon>Gunneridae</taxon>
        <taxon>Pentapetalae</taxon>
        <taxon>rosids</taxon>
        <taxon>malvids</taxon>
        <taxon>Brassicales</taxon>
        <taxon>Brassicaceae</taxon>
        <taxon>Camelineae</taxon>
        <taxon>Arabidopsis</taxon>
    </lineage>
</organism>
<feature type="chain" id="PRO_0000429681" description="Transcription repressor OFP12">
    <location>
        <begin position="1"/>
        <end position="226"/>
    </location>
</feature>
<feature type="domain" description="OVATE" evidence="2">
    <location>
        <begin position="152"/>
        <end position="217"/>
    </location>
</feature>
<feature type="region of interest" description="Disordered" evidence="3">
    <location>
        <begin position="68"/>
        <end position="104"/>
    </location>
</feature>
<feature type="compositionally biased region" description="Low complexity" evidence="3">
    <location>
        <begin position="68"/>
        <end position="87"/>
    </location>
</feature>
<gene>
    <name type="primary">OFP12</name>
    <name type="ordered locus">At1g05420</name>
</gene>
<evidence type="ECO:0000250" key="1"/>
<evidence type="ECO:0000255" key="2">
    <source>
        <dbReference type="PROSITE-ProRule" id="PRU01090"/>
    </source>
</evidence>
<evidence type="ECO:0000256" key="3">
    <source>
        <dbReference type="SAM" id="MobiDB-lite"/>
    </source>
</evidence>
<evidence type="ECO:0000269" key="4">
    <source>
    </source>
</evidence>
<evidence type="ECO:0000269" key="5">
    <source>
    </source>
</evidence>
<evidence type="ECO:0000305" key="6"/>
<evidence type="ECO:0000305" key="7">
    <source>
    </source>
</evidence>
<name>OFP12_ARATH</name>
<proteinExistence type="evidence at protein level"/>
<reference key="1">
    <citation type="journal article" date="2000" name="Nature">
        <title>Sequence and analysis of chromosome 1 of the plant Arabidopsis thaliana.</title>
        <authorList>
            <person name="Theologis A."/>
            <person name="Ecker J.R."/>
            <person name="Palm C.J."/>
            <person name="Federspiel N.A."/>
            <person name="Kaul S."/>
            <person name="White O."/>
            <person name="Alonso J."/>
            <person name="Altafi H."/>
            <person name="Araujo R."/>
            <person name="Bowman C.L."/>
            <person name="Brooks S.Y."/>
            <person name="Buehler E."/>
            <person name="Chan A."/>
            <person name="Chao Q."/>
            <person name="Chen H."/>
            <person name="Cheuk R.F."/>
            <person name="Chin C.W."/>
            <person name="Chung M.K."/>
            <person name="Conn L."/>
            <person name="Conway A.B."/>
            <person name="Conway A.R."/>
            <person name="Creasy T.H."/>
            <person name="Dewar K."/>
            <person name="Dunn P."/>
            <person name="Etgu P."/>
            <person name="Feldblyum T.V."/>
            <person name="Feng J.-D."/>
            <person name="Fong B."/>
            <person name="Fujii C.Y."/>
            <person name="Gill J.E."/>
            <person name="Goldsmith A.D."/>
            <person name="Haas B."/>
            <person name="Hansen N.F."/>
            <person name="Hughes B."/>
            <person name="Huizar L."/>
            <person name="Hunter J.L."/>
            <person name="Jenkins J."/>
            <person name="Johnson-Hopson C."/>
            <person name="Khan S."/>
            <person name="Khaykin E."/>
            <person name="Kim C.J."/>
            <person name="Koo H.L."/>
            <person name="Kremenetskaia I."/>
            <person name="Kurtz D.B."/>
            <person name="Kwan A."/>
            <person name="Lam B."/>
            <person name="Langin-Hooper S."/>
            <person name="Lee A."/>
            <person name="Lee J.M."/>
            <person name="Lenz C.A."/>
            <person name="Li J.H."/>
            <person name="Li Y.-P."/>
            <person name="Lin X."/>
            <person name="Liu S.X."/>
            <person name="Liu Z.A."/>
            <person name="Luros J.S."/>
            <person name="Maiti R."/>
            <person name="Marziali A."/>
            <person name="Militscher J."/>
            <person name="Miranda M."/>
            <person name="Nguyen M."/>
            <person name="Nierman W.C."/>
            <person name="Osborne B.I."/>
            <person name="Pai G."/>
            <person name="Peterson J."/>
            <person name="Pham P.K."/>
            <person name="Rizzo M."/>
            <person name="Rooney T."/>
            <person name="Rowley D."/>
            <person name="Sakano H."/>
            <person name="Salzberg S.L."/>
            <person name="Schwartz J.R."/>
            <person name="Shinn P."/>
            <person name="Southwick A.M."/>
            <person name="Sun H."/>
            <person name="Tallon L.J."/>
            <person name="Tambunga G."/>
            <person name="Toriumi M.J."/>
            <person name="Town C.D."/>
            <person name="Utterback T."/>
            <person name="Van Aken S."/>
            <person name="Vaysberg M."/>
            <person name="Vysotskaia V.S."/>
            <person name="Walker M."/>
            <person name="Wu D."/>
            <person name="Yu G."/>
            <person name="Fraser C.M."/>
            <person name="Venter J.C."/>
            <person name="Davis R.W."/>
        </authorList>
    </citation>
    <scope>NUCLEOTIDE SEQUENCE [LARGE SCALE GENOMIC DNA]</scope>
    <source>
        <strain>cv. Columbia</strain>
    </source>
</reference>
<reference key="2">
    <citation type="journal article" date="2017" name="Plant J.">
        <title>Araport11: a complete reannotation of the Arabidopsis thaliana reference genome.</title>
        <authorList>
            <person name="Cheng C.Y."/>
            <person name="Krishnakumar V."/>
            <person name="Chan A.P."/>
            <person name="Thibaud-Nissen F."/>
            <person name="Schobel S."/>
            <person name="Town C.D."/>
        </authorList>
    </citation>
    <scope>GENOME REANNOTATION</scope>
    <source>
        <strain>cv. Columbia</strain>
    </source>
</reference>
<reference key="3">
    <citation type="journal article" date="2005" name="Proc. Natl. Acad. Sci. U.S.A.">
        <title>A central role of Arabidopsis thaliana ovate family proteins in networking and subcellular localization of 3-aa loop extension homeodomain proteins.</title>
        <authorList>
            <person name="Hackbusch J."/>
            <person name="Richter K."/>
            <person name="Muller J."/>
            <person name="Salamini F."/>
            <person name="Uhrig J.F."/>
        </authorList>
    </citation>
    <scope>INTERACTION WITH KNAT1; KNAT2; KNAT3 AND KNAT4</scope>
</reference>
<reference key="4">
    <citation type="journal article" date="2011" name="PLoS ONE">
        <title>Arabidopsis ovate family proteins, a novel transcriptional repressor family, control multiple aspects of plant growth and development.</title>
        <authorList>
            <person name="Wang S."/>
            <person name="Chang Y."/>
            <person name="Guo J."/>
            <person name="Zeng Q."/>
            <person name="Ellis B.E."/>
            <person name="Chen J.G."/>
        </authorList>
    </citation>
    <scope>FUNCTION</scope>
    <scope>TISSUE SPECIFICITY</scope>
    <scope>GENE FAMILY</scope>
</reference>
<sequence length="226" mass="24968">MPRVMWKNFHLCFPSNLTKPSSSPSGATSDDPNRPSILLINNFNLLYDDSSAAHRRLSKPLIHDVEPSSTFTASTSTAANSSSSSASYDDSDNYGFAPDDDSPPPDLTAVLASRRFFFSSPGCSNSITDSPDLRCRDNYDTATRLLTGGTAVKHYVQSPDPYNDFRRSMQEMIDAVTNAGDLRRYEFLHELLLSYLSLNAADTHKFIIRAFADILVSLLSDGHRIS</sequence>
<comment type="function">
    <text evidence="5">Transcriptional repressor that regulates multiple aspects of plant growth and development through the regulation of BEL1-LIKE (BLH) and KNOX TALE (KNAT) homeodomain transcription factors.</text>
</comment>
<comment type="subunit">
    <text evidence="4">Interacts with KNAT1, KNAT2, KNAT3 and KNAT4.</text>
</comment>
<comment type="subcellular location">
    <subcellularLocation>
        <location evidence="1">Nucleus</location>
    </subcellularLocation>
</comment>
<comment type="tissue specificity">
    <text evidence="5">Expressed in roots, shoots, stems, flower buds and siliques.</text>
</comment>
<comment type="miscellaneous">
    <text evidence="7">Plants over-expressing OFP12 have no visible phenotype.</text>
</comment>
<comment type="sequence caution" evidence="6">
    <conflict type="erroneous initiation">
        <sequence resource="EMBL-CDS" id="AAF79723"/>
    </conflict>
    <text>Extended N-terminus.</text>
</comment>